<reference key="1">
    <citation type="journal article" date="2000" name="Blood">
        <title>Cloning, characterization, and functional studies of human and mouse glycoprotein VI: a platelet-specific collagen receptor from the immunoglobulin superfamily.</title>
        <authorList>
            <person name="Jandrot-Perrus M."/>
            <person name="Busfield S."/>
            <person name="Lagrue A.-H."/>
            <person name="Xiong X."/>
            <person name="Debili N."/>
            <person name="Chickering T."/>
            <person name="Le Couedic J.-P."/>
            <person name="Goodearl A."/>
            <person name="Dussault B."/>
            <person name="Fraser C."/>
            <person name="Vainchenker W."/>
            <person name="Villeval J.-L."/>
        </authorList>
    </citation>
    <scope>NUCLEOTIDE SEQUENCE [MRNA]</scope>
    <scope>FUNCTION</scope>
    <scope>TISSUE SPECIFICITY</scope>
    <scope>INTERACTION WITH FC RECEPTOR GAMMA CHAIN</scope>
    <scope>DEVELOPMENTAL STAGE</scope>
    <source>
        <tissue>Megakaryocyte</tissue>
    </source>
</reference>
<reference key="2">
    <citation type="journal article" date="2009" name="PLoS Biol.">
        <title>Lineage-specific biology revealed by a finished genome assembly of the mouse.</title>
        <authorList>
            <person name="Church D.M."/>
            <person name="Goodstadt L."/>
            <person name="Hillier L.W."/>
            <person name="Zody M.C."/>
            <person name="Goldstein S."/>
            <person name="She X."/>
            <person name="Bult C.J."/>
            <person name="Agarwala R."/>
            <person name="Cherry J.L."/>
            <person name="DiCuccio M."/>
            <person name="Hlavina W."/>
            <person name="Kapustin Y."/>
            <person name="Meric P."/>
            <person name="Maglott D."/>
            <person name="Birtle Z."/>
            <person name="Marques A.C."/>
            <person name="Graves T."/>
            <person name="Zhou S."/>
            <person name="Teague B."/>
            <person name="Potamousis K."/>
            <person name="Churas C."/>
            <person name="Place M."/>
            <person name="Herschleb J."/>
            <person name="Runnheim R."/>
            <person name="Forrest D."/>
            <person name="Amos-Landgraf J."/>
            <person name="Schwartz D.C."/>
            <person name="Cheng Z."/>
            <person name="Lindblad-Toh K."/>
            <person name="Eichler E.E."/>
            <person name="Ponting C.P."/>
        </authorList>
    </citation>
    <scope>NUCLEOTIDE SEQUENCE [LARGE SCALE GENOMIC DNA]</scope>
    <source>
        <strain>C57BL/6J</strain>
    </source>
</reference>
<reference key="3">
    <citation type="journal article" date="2005" name="Arterioscler. Thromb. Vasc. Biol.">
        <title>The glycoprotein VI-phospholipase Cgamma2 signaling pathway controls thrombus formation induced by collagen and tissue factor in vitro and in vivo.</title>
        <authorList>
            <person name="Munnix I.C."/>
            <person name="Strehl A."/>
            <person name="Kuijpers M.J."/>
            <person name="Auger J.M."/>
            <person name="van der Meijden P.E."/>
            <person name="van Zandvoort M.A."/>
            <person name="oude Egbrink M.G."/>
            <person name="Nieswandt B."/>
            <person name="Heemskerk J.W."/>
        </authorList>
    </citation>
    <scope>FUNCTION</scope>
</reference>
<reference key="4">
    <citation type="journal article" date="2006" name="Thromb. Res.">
        <title>GPVI-deficient mice lack collagen responses and are protected against experimentally induced pulmonary thromboembolism.</title>
        <authorList>
            <person name="Lockyer S."/>
            <person name="Okuyama K."/>
            <person name="Begum S."/>
            <person name="Le S."/>
            <person name="Sun B."/>
            <person name="Watanabe T."/>
            <person name="Matsumoto Y."/>
            <person name="Yoshitake M."/>
            <person name="Kambayashi J."/>
            <person name="Tandon N.N."/>
        </authorList>
    </citation>
    <scope>FUNCTION</scope>
    <scope>DISRUPTION PHENOTYPE</scope>
</reference>
<reference key="5">
    <citation type="journal article" date="2014" name="Proc. Natl. Acad. Sci. U.S.A.">
        <title>Biological role of prolyl 3-hydroxylation in type IV collagen.</title>
        <authorList>
            <person name="Pokidysheva E."/>
            <person name="Boudko S."/>
            <person name="Vranka J."/>
            <person name="Zientek K."/>
            <person name="Maddox K."/>
            <person name="Moser M."/>
            <person name="Faessler R."/>
            <person name="Ware J."/>
            <person name="Baechinger H.P."/>
        </authorList>
    </citation>
    <scope>DISRUPTION PHENOTYPE</scope>
    <scope>FUNCTION</scope>
    <scope>SUBCELLULAR LOCATION</scope>
    <scope>INTERACTION WITH COL1A1</scope>
    <scope>LACK OF INTERACTION WITH COL4A4</scope>
</reference>
<feature type="signal peptide" evidence="2">
    <location>
        <begin position="1"/>
        <end position="21"/>
    </location>
</feature>
<feature type="chain" id="PRO_0000232384" description="Platelet glycoprotein VI">
    <location>
        <begin position="22"/>
        <end position="313"/>
    </location>
</feature>
<feature type="topological domain" description="Extracellular" evidence="2">
    <location>
        <begin position="22"/>
        <end position="265"/>
    </location>
</feature>
<feature type="transmembrane region" description="Helical" evidence="2">
    <location>
        <begin position="266"/>
        <end position="286"/>
    </location>
</feature>
<feature type="topological domain" description="Cytoplasmic" evidence="2">
    <location>
        <begin position="287"/>
        <end position="313"/>
    </location>
</feature>
<feature type="domain" description="Ig-like C2-type 1">
    <location>
        <begin position="27"/>
        <end position="105"/>
    </location>
</feature>
<feature type="domain" description="Ig-like C2-type 2">
    <location>
        <begin position="115"/>
        <end position="197"/>
    </location>
</feature>
<feature type="region of interest" description="Disordered" evidence="3">
    <location>
        <begin position="213"/>
        <end position="236"/>
    </location>
</feature>
<feature type="glycosylation site" description="N-linked (GlcNAc...) asparagine" evidence="1">
    <location>
        <position position="93"/>
    </location>
</feature>
<feature type="glycosylation site" description="N-linked (GlcNAc...) asparagine" evidence="2">
    <location>
        <position position="244"/>
    </location>
</feature>
<feature type="disulfide bond" evidence="1">
    <location>
        <begin position="49"/>
        <end position="89"/>
    </location>
</feature>
<feature type="disulfide bond" evidence="1">
    <location>
        <begin position="135"/>
        <end position="181"/>
    </location>
</feature>
<feature type="sequence conflict" description="In Ref. 1; no nucleotide entry." evidence="8" ref="1">
    <original>F</original>
    <variation>I</variation>
    <location>
        <position position="256"/>
    </location>
</feature>
<sequence>MSPASPTFFCIGLCVLQVIQTQSGPLPKPSLQAQPSSLVPLGQSVILRCQGPPDVDLYRLEKLKPEKYEDQDFLFIPTMERSNAGRYRCSYQNGSHWSLPSDQLELIATGVYAKPSLSAHPSSAVPQGRDVTLKCQSPYSFDEFVLYKEGDTGSYKRPEKWYRANFPIITVTAAHSGTYRCYSFSSSSPYLWSAPSDPLVLVVTGLSATPSQVPTEESFPVTESSRRPSILPTNKISTTEKPMNITASPEGLSPPFGFAHQHYAKGNLVRICLGATIIIILLGLLAEDWHSRKKCLQHRMRALQRPLPPLPLA</sequence>
<keyword id="KW-0094">Blood coagulation</keyword>
<keyword id="KW-1003">Cell membrane</keyword>
<keyword id="KW-1015">Disulfide bond</keyword>
<keyword id="KW-0325">Glycoprotein</keyword>
<keyword id="KW-0356">Hemostasis</keyword>
<keyword id="KW-0393">Immunoglobulin domain</keyword>
<keyword id="KW-0472">Membrane</keyword>
<keyword id="KW-0675">Receptor</keyword>
<keyword id="KW-1185">Reference proteome</keyword>
<keyword id="KW-0677">Repeat</keyword>
<keyword id="KW-0732">Signal</keyword>
<keyword id="KW-0812">Transmembrane</keyword>
<keyword id="KW-1133">Transmembrane helix</keyword>
<organism>
    <name type="scientific">Mus musculus</name>
    <name type="common">Mouse</name>
    <dbReference type="NCBI Taxonomy" id="10090"/>
    <lineage>
        <taxon>Eukaryota</taxon>
        <taxon>Metazoa</taxon>
        <taxon>Chordata</taxon>
        <taxon>Craniata</taxon>
        <taxon>Vertebrata</taxon>
        <taxon>Euteleostomi</taxon>
        <taxon>Mammalia</taxon>
        <taxon>Eutheria</taxon>
        <taxon>Euarchontoglires</taxon>
        <taxon>Glires</taxon>
        <taxon>Rodentia</taxon>
        <taxon>Myomorpha</taxon>
        <taxon>Muroidea</taxon>
        <taxon>Muridae</taxon>
        <taxon>Murinae</taxon>
        <taxon>Mus</taxon>
        <taxon>Mus</taxon>
    </lineage>
</organism>
<dbReference type="EMBL" id="AC137969">
    <property type="status" value="NOT_ANNOTATED_CDS"/>
    <property type="molecule type" value="Genomic_DNA"/>
</dbReference>
<dbReference type="CCDS" id="CCDS51972.1"/>
<dbReference type="RefSeq" id="NP_001156486.1">
    <property type="nucleotide sequence ID" value="NM_001163014.1"/>
</dbReference>
<dbReference type="SMR" id="P0C191"/>
<dbReference type="FunCoup" id="P0C191">
    <property type="interactions" value="172"/>
</dbReference>
<dbReference type="STRING" id="10090.ENSMUSP00000145740"/>
<dbReference type="GlyCosmos" id="P0C191">
    <property type="glycosylation" value="2 sites, No reported glycans"/>
</dbReference>
<dbReference type="GlyGen" id="P0C191">
    <property type="glycosylation" value="3 sites"/>
</dbReference>
<dbReference type="PhosphoSitePlus" id="P0C191"/>
<dbReference type="PaxDb" id="10090-ENSMUSP00000104231"/>
<dbReference type="ProteomicsDB" id="271082"/>
<dbReference type="ABCD" id="P0C191">
    <property type="antibodies" value="1 sequenced antibody"/>
</dbReference>
<dbReference type="Antibodypedia" id="32992">
    <property type="antibodies" value="336 antibodies from 34 providers"/>
</dbReference>
<dbReference type="DNASU" id="243816"/>
<dbReference type="Ensembl" id="ENSMUST00000206928.2">
    <property type="protein sequence ID" value="ENSMUSP00000145740.2"/>
    <property type="gene ID" value="ENSMUSG00000078810.5"/>
</dbReference>
<dbReference type="GeneID" id="243816"/>
<dbReference type="KEGG" id="mmu:243816"/>
<dbReference type="UCSC" id="uc009exk.2">
    <property type="organism name" value="mouse"/>
</dbReference>
<dbReference type="AGR" id="MGI:1889810"/>
<dbReference type="CTD" id="51206"/>
<dbReference type="MGI" id="MGI:1889810">
    <property type="gene designation" value="Gp6"/>
</dbReference>
<dbReference type="VEuPathDB" id="HostDB:ENSMUSG00000078810"/>
<dbReference type="eggNOG" id="ENOG502SWRJ">
    <property type="taxonomic scope" value="Eukaryota"/>
</dbReference>
<dbReference type="GeneTree" id="ENSGT01100000263478"/>
<dbReference type="HOGENOM" id="CLU_021100_1_0_1"/>
<dbReference type="InParanoid" id="P0C191"/>
<dbReference type="OMA" id="PARQHYT"/>
<dbReference type="OrthoDB" id="9451149at2759"/>
<dbReference type="PhylomeDB" id="P0C191"/>
<dbReference type="TreeFam" id="TF336644"/>
<dbReference type="Reactome" id="R-MMU-114604">
    <property type="pathway name" value="GPVI-mediated activation cascade"/>
</dbReference>
<dbReference type="Reactome" id="R-MMU-202733">
    <property type="pathway name" value="Cell surface interactions at the vascular wall"/>
</dbReference>
<dbReference type="Reactome" id="R-MMU-75892">
    <property type="pathway name" value="Platelet Adhesion to exposed collagen"/>
</dbReference>
<dbReference type="BioGRID-ORCS" id="243816">
    <property type="hits" value="1 hit in 78 CRISPR screens"/>
</dbReference>
<dbReference type="PRO" id="PR:P0C191"/>
<dbReference type="Proteomes" id="UP000000589">
    <property type="component" value="Chromosome 7"/>
</dbReference>
<dbReference type="RNAct" id="P0C191">
    <property type="molecule type" value="protein"/>
</dbReference>
<dbReference type="Bgee" id="ENSMUSG00000078810">
    <property type="expression patterns" value="Expressed in blood and 21 other cell types or tissues"/>
</dbReference>
<dbReference type="ExpressionAtlas" id="P0C191">
    <property type="expression patterns" value="baseline and differential"/>
</dbReference>
<dbReference type="GO" id="GO:0009986">
    <property type="term" value="C:cell surface"/>
    <property type="evidence" value="ECO:0000314"/>
    <property type="project" value="MGI"/>
</dbReference>
<dbReference type="GO" id="GO:0045121">
    <property type="term" value="C:membrane raft"/>
    <property type="evidence" value="ECO:0007669"/>
    <property type="project" value="Ensembl"/>
</dbReference>
<dbReference type="GO" id="GO:0005886">
    <property type="term" value="C:plasma membrane"/>
    <property type="evidence" value="ECO:0000314"/>
    <property type="project" value="MGI"/>
</dbReference>
<dbReference type="GO" id="GO:0097197">
    <property type="term" value="C:tetraspanin-enriched microdomain"/>
    <property type="evidence" value="ECO:0007669"/>
    <property type="project" value="Ensembl"/>
</dbReference>
<dbReference type="GO" id="GO:0005518">
    <property type="term" value="F:collagen binding"/>
    <property type="evidence" value="ECO:0000314"/>
    <property type="project" value="MGI"/>
</dbReference>
<dbReference type="GO" id="GO:0038064">
    <property type="term" value="F:collagen receptor activity"/>
    <property type="evidence" value="ECO:0000315"/>
    <property type="project" value="MGI"/>
</dbReference>
<dbReference type="GO" id="GO:1990782">
    <property type="term" value="F:protein tyrosine kinase binding"/>
    <property type="evidence" value="ECO:0007669"/>
    <property type="project" value="Ensembl"/>
</dbReference>
<dbReference type="GO" id="GO:0038065">
    <property type="term" value="P:collagen-activated signaling pathway"/>
    <property type="evidence" value="ECO:0000315"/>
    <property type="project" value="MGI"/>
</dbReference>
<dbReference type="GO" id="GO:0038063">
    <property type="term" value="P:collagen-activated tyrosine kinase receptor signaling pathway"/>
    <property type="evidence" value="ECO:0000314"/>
    <property type="project" value="MGI"/>
</dbReference>
<dbReference type="GO" id="GO:0070527">
    <property type="term" value="P:platelet aggregation"/>
    <property type="evidence" value="ECO:0000314"/>
    <property type="project" value="MGI"/>
</dbReference>
<dbReference type="FunFam" id="2.60.40.10:FF:000049">
    <property type="entry name" value="Leukocyte immunoglobulin-like receptor subfamily B member 1"/>
    <property type="match status" value="2"/>
</dbReference>
<dbReference type="Gene3D" id="2.60.40.10">
    <property type="entry name" value="Immunoglobulins"/>
    <property type="match status" value="2"/>
</dbReference>
<dbReference type="InterPro" id="IPR036179">
    <property type="entry name" value="Ig-like_dom_sf"/>
</dbReference>
<dbReference type="InterPro" id="IPR013783">
    <property type="entry name" value="Ig-like_fold"/>
</dbReference>
<dbReference type="InterPro" id="IPR050412">
    <property type="entry name" value="Ig-like_Receptors_ImmuneReg"/>
</dbReference>
<dbReference type="InterPro" id="IPR003599">
    <property type="entry name" value="Ig_sub"/>
</dbReference>
<dbReference type="InterPro" id="IPR003598">
    <property type="entry name" value="Ig_sub2"/>
</dbReference>
<dbReference type="PANTHER" id="PTHR11738">
    <property type="entry name" value="MHC CLASS I NK CELL RECEPTOR"/>
    <property type="match status" value="1"/>
</dbReference>
<dbReference type="PANTHER" id="PTHR11738:SF185">
    <property type="entry name" value="PLATELET GLYCOPROTEIN VI"/>
    <property type="match status" value="1"/>
</dbReference>
<dbReference type="Pfam" id="PF13895">
    <property type="entry name" value="Ig_2"/>
    <property type="match status" value="2"/>
</dbReference>
<dbReference type="SMART" id="SM00409">
    <property type="entry name" value="IG"/>
    <property type="match status" value="2"/>
</dbReference>
<dbReference type="SMART" id="SM00408">
    <property type="entry name" value="IGc2"/>
    <property type="match status" value="2"/>
</dbReference>
<dbReference type="SUPFAM" id="SSF48726">
    <property type="entry name" value="Immunoglobulin"/>
    <property type="match status" value="2"/>
</dbReference>
<gene>
    <name evidence="10" type="primary">Gp6</name>
</gene>
<name>GPVI_MOUSE</name>
<protein>
    <recommendedName>
        <fullName evidence="8">Platelet glycoprotein VI</fullName>
        <shortName evidence="8">GPVI</shortName>
    </recommendedName>
    <alternativeName>
        <fullName>Glycoprotein 5</fullName>
    </alternativeName>
</protein>
<proteinExistence type="evidence at protein level"/>
<accession>P0C191</accession>
<accession>E9QPN2</accession>
<evidence type="ECO:0000250" key="1">
    <source>
        <dbReference type="UniProtKB" id="Q9HCN6"/>
    </source>
</evidence>
<evidence type="ECO:0000255" key="2"/>
<evidence type="ECO:0000256" key="3">
    <source>
        <dbReference type="SAM" id="MobiDB-lite"/>
    </source>
</evidence>
<evidence type="ECO:0000269" key="4">
    <source>
    </source>
</evidence>
<evidence type="ECO:0000269" key="5">
    <source>
    </source>
</evidence>
<evidence type="ECO:0000269" key="6">
    <source>
    </source>
</evidence>
<evidence type="ECO:0000269" key="7">
    <source>
    </source>
</evidence>
<evidence type="ECO:0000305" key="8"/>
<evidence type="ECO:0000305" key="9">
    <source>
    </source>
</evidence>
<evidence type="ECO:0000312" key="10">
    <source>
        <dbReference type="MGI" id="MGI:1889810"/>
    </source>
</evidence>
<comment type="function">
    <text evidence="4 5 6 7">Collagen receptor involved in collagen-induced platelet adhesion and activation (PubMed:16139873, PubMed:24368846). Plays a key role in platelet procoagulant activity and subsequent thrombin and fibrin formation. This procoagulant function may contribute to arterial and venous thrombus formation. The signaling pathway involves the FcR gamma-chain, the Src kinases (likely FYN or LYN) and SYK, the adapter protein LAT and leads to the activation of PLCG2.</text>
</comment>
<comment type="subunit">
    <text evidence="1 7">Associated with Fc receptor gamma chain. The GPVI:FcRgamma complex is associated with the Src kinase family FYN and LYN. Interacts with TRAF4 (By similarity). Interacts with COL1A1, but not with COL4A4 (PubMed:24368846).</text>
</comment>
<comment type="subcellular location">
    <subcellularLocation>
        <location evidence="9">Cell membrane</location>
        <topology evidence="2">Single-pass membrane protein</topology>
    </subcellularLocation>
</comment>
<comment type="tissue specificity">
    <text evidence="4">Megakaryocytes and platelets.</text>
</comment>
<comment type="developmental stage">
    <text evidence="4">Expressed at embryonic day 13.5, 14.5 and 16.5. Expression decreases in intensity at day 18.5 and in 1.5 day-old newborn.</text>
</comment>
<comment type="disruption phenotype">
    <text evidence="5 7">Mice deficient in Gp6 show a complete protection against arterial thrombosis and induced pulmonary thromboembolism, without significant prolongation of bleeding time (PubMed:16139873). Mutant mice deficient in Gp6 and P3h2 are born at the expected Mendelian rate and have no visible phenotype (PubMed:24368846).</text>
</comment>